<name>Y118_CERSK</name>
<protein>
    <recommendedName>
        <fullName evidence="1">UPF0102 protein RSKD131_0118</fullName>
    </recommendedName>
</protein>
<comment type="similarity">
    <text evidence="1">Belongs to the UPF0102 family.</text>
</comment>
<dbReference type="EMBL" id="CP001150">
    <property type="protein sequence ID" value="ACL99977.1"/>
    <property type="molecule type" value="Genomic_DNA"/>
</dbReference>
<dbReference type="RefSeq" id="WP_012643491.1">
    <property type="nucleotide sequence ID" value="NC_011963.1"/>
</dbReference>
<dbReference type="SMR" id="B9KLJ5"/>
<dbReference type="GeneID" id="67445602"/>
<dbReference type="KEGG" id="rsk:RSKD131_0118"/>
<dbReference type="HOGENOM" id="CLU_115353_0_1_5"/>
<dbReference type="GO" id="GO:0003676">
    <property type="term" value="F:nucleic acid binding"/>
    <property type="evidence" value="ECO:0007669"/>
    <property type="project" value="InterPro"/>
</dbReference>
<dbReference type="Gene3D" id="3.40.1350.10">
    <property type="match status" value="1"/>
</dbReference>
<dbReference type="HAMAP" id="MF_00048">
    <property type="entry name" value="UPF0102"/>
    <property type="match status" value="1"/>
</dbReference>
<dbReference type="InterPro" id="IPR011335">
    <property type="entry name" value="Restrct_endonuc-II-like"/>
</dbReference>
<dbReference type="InterPro" id="IPR011856">
    <property type="entry name" value="tRNA_endonuc-like_dom_sf"/>
</dbReference>
<dbReference type="InterPro" id="IPR003509">
    <property type="entry name" value="UPF0102_YraN-like"/>
</dbReference>
<dbReference type="NCBIfam" id="NF011269">
    <property type="entry name" value="PRK14676.1"/>
    <property type="match status" value="1"/>
</dbReference>
<dbReference type="PANTHER" id="PTHR34039">
    <property type="entry name" value="UPF0102 PROTEIN YRAN"/>
    <property type="match status" value="1"/>
</dbReference>
<dbReference type="PANTHER" id="PTHR34039:SF1">
    <property type="entry name" value="UPF0102 PROTEIN YRAN"/>
    <property type="match status" value="1"/>
</dbReference>
<dbReference type="Pfam" id="PF02021">
    <property type="entry name" value="UPF0102"/>
    <property type="match status" value="1"/>
</dbReference>
<dbReference type="SUPFAM" id="SSF52980">
    <property type="entry name" value="Restriction endonuclease-like"/>
    <property type="match status" value="1"/>
</dbReference>
<proteinExistence type="inferred from homology"/>
<accession>B9KLJ5</accession>
<feature type="chain" id="PRO_1000200158" description="UPF0102 protein RSKD131_0118">
    <location>
        <begin position="1"/>
        <end position="117"/>
    </location>
</feature>
<gene>
    <name type="ordered locus">RSKD131_0118</name>
</gene>
<reference key="1">
    <citation type="journal article" date="2009" name="J. Bacteriol.">
        <title>Complete genome sequence of Rhodobacter sphaeroides KD131.</title>
        <authorList>
            <person name="Lim S.-K."/>
            <person name="Kim S.J."/>
            <person name="Cha S.H."/>
            <person name="Oh Y.-K."/>
            <person name="Rhee H.-J."/>
            <person name="Kim M.-S."/>
            <person name="Lee J.K."/>
        </authorList>
    </citation>
    <scope>NUCLEOTIDE SEQUENCE [LARGE SCALE GENOMIC DNA]</scope>
    <source>
        <strain>KD131 / KCTC 12085</strain>
    </source>
</reference>
<evidence type="ECO:0000255" key="1">
    <source>
        <dbReference type="HAMAP-Rule" id="MF_00048"/>
    </source>
</evidence>
<sequence>MSGEVSYHAGQTAEEAVARIYDRSGRPVAARRWRGLSGEIDLIAREGAEVIFIEVKKSTSHAAAAARLSRRQMDRIYGAASEFLAGEPRGQLTASRFDVALVDALGRVEIIENAFAA</sequence>
<organism>
    <name type="scientific">Cereibacter sphaeroides (strain KD131 / KCTC 12085)</name>
    <name type="common">Rhodobacter sphaeroides</name>
    <dbReference type="NCBI Taxonomy" id="557760"/>
    <lineage>
        <taxon>Bacteria</taxon>
        <taxon>Pseudomonadati</taxon>
        <taxon>Pseudomonadota</taxon>
        <taxon>Alphaproteobacteria</taxon>
        <taxon>Rhodobacterales</taxon>
        <taxon>Paracoccaceae</taxon>
        <taxon>Cereibacter</taxon>
    </lineage>
</organism>